<dbReference type="EMBL" id="X58692">
    <property type="protein sequence ID" value="CAA41535.1"/>
    <property type="molecule type" value="Genomic_DNA"/>
</dbReference>
<dbReference type="PIR" id="S13623">
    <property type="entry name" value="S13623"/>
</dbReference>
<dbReference type="SMR" id="P23397"/>
<dbReference type="GO" id="GO:0005634">
    <property type="term" value="C:nucleus"/>
    <property type="evidence" value="ECO:0007669"/>
    <property type="project" value="UniProtKB-SubCell"/>
</dbReference>
<dbReference type="GO" id="GO:0000981">
    <property type="term" value="F:DNA-binding transcription factor activity, RNA polymerase II-specific"/>
    <property type="evidence" value="ECO:0007669"/>
    <property type="project" value="InterPro"/>
</dbReference>
<dbReference type="GO" id="GO:0000978">
    <property type="term" value="F:RNA polymerase II cis-regulatory region sequence-specific DNA binding"/>
    <property type="evidence" value="ECO:0007669"/>
    <property type="project" value="TreeGrafter"/>
</dbReference>
<dbReference type="GO" id="GO:0030182">
    <property type="term" value="P:neuron differentiation"/>
    <property type="evidence" value="ECO:0007669"/>
    <property type="project" value="TreeGrafter"/>
</dbReference>
<dbReference type="GO" id="GO:0007367">
    <property type="term" value="P:segment polarity determination"/>
    <property type="evidence" value="ECO:0007669"/>
    <property type="project" value="UniProtKB-KW"/>
</dbReference>
<dbReference type="CDD" id="cd00086">
    <property type="entry name" value="homeodomain"/>
    <property type="match status" value="1"/>
</dbReference>
<dbReference type="Gene3D" id="1.10.10.60">
    <property type="entry name" value="Homeodomain-like"/>
    <property type="match status" value="1"/>
</dbReference>
<dbReference type="InterPro" id="IPR050720">
    <property type="entry name" value="Engrailed_Homeobox_TFs"/>
</dbReference>
<dbReference type="InterPro" id="IPR001356">
    <property type="entry name" value="HD"/>
</dbReference>
<dbReference type="InterPro" id="IPR000747">
    <property type="entry name" value="HD_engrailed"/>
</dbReference>
<dbReference type="InterPro" id="IPR020479">
    <property type="entry name" value="HD_metazoa"/>
</dbReference>
<dbReference type="InterPro" id="IPR019549">
    <property type="entry name" value="Homeobox-engrailed_C-terminal"/>
</dbReference>
<dbReference type="InterPro" id="IPR019737">
    <property type="entry name" value="Homeobox-engrailed_CS"/>
</dbReference>
<dbReference type="InterPro" id="IPR017970">
    <property type="entry name" value="Homeobox_CS"/>
</dbReference>
<dbReference type="InterPro" id="IPR009057">
    <property type="entry name" value="Homeodomain-like_sf"/>
</dbReference>
<dbReference type="PANTHER" id="PTHR24341">
    <property type="entry name" value="HOMEOBOX PROTEIN ENGRAILED"/>
    <property type="match status" value="1"/>
</dbReference>
<dbReference type="PANTHER" id="PTHR24341:SF6">
    <property type="entry name" value="HOMEOBOX PROTEIN INVECTED"/>
    <property type="match status" value="1"/>
</dbReference>
<dbReference type="Pfam" id="PF10525">
    <property type="entry name" value="Engrail_1_C_sig"/>
    <property type="match status" value="1"/>
</dbReference>
<dbReference type="Pfam" id="PF00046">
    <property type="entry name" value="Homeodomain"/>
    <property type="match status" value="1"/>
</dbReference>
<dbReference type="PRINTS" id="PR00026">
    <property type="entry name" value="ENGRAILED"/>
</dbReference>
<dbReference type="PRINTS" id="PR00024">
    <property type="entry name" value="HOMEOBOX"/>
</dbReference>
<dbReference type="SMART" id="SM00389">
    <property type="entry name" value="HOX"/>
    <property type="match status" value="1"/>
</dbReference>
<dbReference type="SUPFAM" id="SSF46689">
    <property type="entry name" value="Homeodomain-like"/>
    <property type="match status" value="1"/>
</dbReference>
<dbReference type="PROSITE" id="PS00033">
    <property type="entry name" value="ENGRAILED"/>
    <property type="match status" value="1"/>
</dbReference>
<dbReference type="PROSITE" id="PS00027">
    <property type="entry name" value="HOMEOBOX_1"/>
    <property type="match status" value="1"/>
</dbReference>
<dbReference type="PROSITE" id="PS50071">
    <property type="entry name" value="HOMEOBOX_2"/>
    <property type="match status" value="1"/>
</dbReference>
<organism>
    <name type="scientific">Helobdella triserialis</name>
    <name type="common">Leech</name>
    <dbReference type="NCBI Taxonomy" id="6413"/>
    <lineage>
        <taxon>Eukaryota</taxon>
        <taxon>Metazoa</taxon>
        <taxon>Spiralia</taxon>
        <taxon>Lophotrochozoa</taxon>
        <taxon>Annelida</taxon>
        <taxon>Clitellata</taxon>
        <taxon>Hirudinea</taxon>
        <taxon>Rhynchobdellida</taxon>
        <taxon>Glossiphoniidae</taxon>
        <taxon>Helobdella</taxon>
    </lineage>
</organism>
<feature type="chain" id="PRO_0000196085" description="Homeobox protein Ht-En">
    <location>
        <begin position="1" status="less than"/>
        <end position="98"/>
    </location>
</feature>
<feature type="DNA-binding region" description="Homeobox" evidence="1">
    <location>
        <begin position="3"/>
        <end position="62"/>
    </location>
</feature>
<feature type="region of interest" description="Disordered" evidence="2">
    <location>
        <begin position="79"/>
        <end position="98"/>
    </location>
</feature>
<feature type="compositionally biased region" description="Low complexity" evidence="2">
    <location>
        <begin position="81"/>
        <end position="98"/>
    </location>
</feature>
<feature type="non-terminal residue">
    <location>
        <position position="1"/>
    </location>
</feature>
<protein>
    <recommendedName>
        <fullName>Homeobox protein Ht-En</fullName>
    </recommendedName>
</protein>
<keyword id="KW-0217">Developmental protein</keyword>
<keyword id="KW-0238">DNA-binding</keyword>
<keyword id="KW-0371">Homeobox</keyword>
<keyword id="KW-0539">Nucleus</keyword>
<keyword id="KW-0709">Segmentation polarity protein</keyword>
<accession>P23397</accession>
<reference key="1">
    <citation type="journal article" date="1991" name="FEBS Lett.">
        <title>Cloning and sequencing of a leech homolog to the Drosophila engrailed gene.</title>
        <authorList>
            <person name="Wedeen C.J."/>
            <person name="Price D.J."/>
            <person name="Weisblat D.A."/>
        </authorList>
    </citation>
    <scope>NUCLEOTIDE SEQUENCE [GENOMIC DNA]</scope>
</reference>
<gene>
    <name type="primary">HT-EN</name>
</gene>
<sequence>QDEKRPRTAFTGDQLARLKREFSENKYLTEQRRTCLAKELNLNESQIKIWFQNKRAKMKKASGVKNQLALQLMAQGLYNHSSSSSSSSSSSSSIFLLA</sequence>
<evidence type="ECO:0000255" key="1">
    <source>
        <dbReference type="PROSITE-ProRule" id="PRU00108"/>
    </source>
</evidence>
<evidence type="ECO:0000256" key="2">
    <source>
        <dbReference type="SAM" id="MobiDB-lite"/>
    </source>
</evidence>
<evidence type="ECO:0000305" key="3"/>
<comment type="function">
    <text>This protein specifies the body segmentation pattern.</text>
</comment>
<comment type="subcellular location">
    <subcellularLocation>
        <location evidence="3">Nucleus</location>
    </subcellularLocation>
</comment>
<comment type="PTM">
    <text evidence="3">Phosphorylated in the Ser-rich domain.</text>
</comment>
<comment type="similarity">
    <text evidence="3">Belongs to the engrailed homeobox family.</text>
</comment>
<name>HMEN_HELTR</name>
<proteinExistence type="inferred from homology"/>